<reference key="1">
    <citation type="journal article" date="2014" name="Stand. Genomic Sci.">
        <title>Complete genome sequence of Anabaena variabilis ATCC 29413.</title>
        <authorList>
            <person name="Thiel T."/>
            <person name="Pratte B.S."/>
            <person name="Zhong J."/>
            <person name="Goodwin L."/>
            <person name="Copeland A."/>
            <person name="Lucas S."/>
            <person name="Han C."/>
            <person name="Pitluck S."/>
            <person name="Land M.L."/>
            <person name="Kyrpides N.C."/>
            <person name="Woyke T."/>
        </authorList>
    </citation>
    <scope>NUCLEOTIDE SEQUENCE [LARGE SCALE GENOMIC DNA]</scope>
    <source>
        <strain>ATCC 29413 / PCC 7937</strain>
    </source>
</reference>
<keyword id="KW-0046">Antibiotic resistance</keyword>
<keyword id="KW-0997">Cell inner membrane</keyword>
<keyword id="KW-1003">Cell membrane</keyword>
<keyword id="KW-0133">Cell shape</keyword>
<keyword id="KW-0961">Cell wall biogenesis/degradation</keyword>
<keyword id="KW-0378">Hydrolase</keyword>
<keyword id="KW-0472">Membrane</keyword>
<keyword id="KW-0573">Peptidoglycan synthesis</keyword>
<keyword id="KW-0812">Transmembrane</keyword>
<keyword id="KW-1133">Transmembrane helix</keyword>
<protein>
    <recommendedName>
        <fullName evidence="1">Undecaprenyl-diphosphatase</fullName>
        <ecNumber evidence="1">3.6.1.27</ecNumber>
    </recommendedName>
    <alternativeName>
        <fullName evidence="1">Bacitracin resistance protein</fullName>
    </alternativeName>
    <alternativeName>
        <fullName evidence="1">Undecaprenyl pyrophosphate phosphatase</fullName>
    </alternativeName>
</protein>
<name>UPPP_TRIV2</name>
<evidence type="ECO:0000255" key="1">
    <source>
        <dbReference type="HAMAP-Rule" id="MF_01006"/>
    </source>
</evidence>
<sequence length="320" mass="33975">MTLFKRQWFVLVSAVSAALSVVLFPLEVFSASPNSVGGGVQQMNILQAIVLGFVQGMTEFLPISSTAHLKVVPVALGWGDPGVAFTAIIQLGSIAAVLWYFWGDLTRIIKGATRAIALKDYADYDLRLSLGIILGTIPIVFFGLLIKKLIPDFDSSPIRSLGAIAVASIVMSLLLGVGEKLGKRERDFEHLTMQDGLLMGLAQALALIPGVSRSGSTLTSGLFMGLQRETAARFSFLLGIPAITLAGLVELKDVFAEGIADGAALPLIVGVISAAIFSYMAIAGLLSFLKTQSTWVFIWYRLVFGIAILGAISAGILQNS</sequence>
<feature type="chain" id="PRO_0000250223" description="Undecaprenyl-diphosphatase">
    <location>
        <begin position="1"/>
        <end position="320"/>
    </location>
</feature>
<feature type="transmembrane region" description="Helical" evidence="1">
    <location>
        <begin position="9"/>
        <end position="29"/>
    </location>
</feature>
<feature type="transmembrane region" description="Helical" evidence="1">
    <location>
        <begin position="82"/>
        <end position="102"/>
    </location>
</feature>
<feature type="transmembrane region" description="Helical" evidence="1">
    <location>
        <begin position="130"/>
        <end position="150"/>
    </location>
</feature>
<feature type="transmembrane region" description="Helical" evidence="1">
    <location>
        <begin position="161"/>
        <end position="181"/>
    </location>
</feature>
<feature type="transmembrane region" description="Helical" evidence="1">
    <location>
        <begin position="191"/>
        <end position="211"/>
    </location>
</feature>
<feature type="transmembrane region" description="Helical" evidence="1">
    <location>
        <begin position="236"/>
        <end position="256"/>
    </location>
</feature>
<feature type="transmembrane region" description="Helical" evidence="1">
    <location>
        <begin position="265"/>
        <end position="285"/>
    </location>
</feature>
<feature type="transmembrane region" description="Helical" evidence="1">
    <location>
        <begin position="296"/>
        <end position="316"/>
    </location>
</feature>
<organism>
    <name type="scientific">Trichormus variabilis (strain ATCC 29413 / PCC 7937)</name>
    <name type="common">Anabaena variabilis</name>
    <dbReference type="NCBI Taxonomy" id="240292"/>
    <lineage>
        <taxon>Bacteria</taxon>
        <taxon>Bacillati</taxon>
        <taxon>Cyanobacteriota</taxon>
        <taxon>Cyanophyceae</taxon>
        <taxon>Nostocales</taxon>
        <taxon>Nostocaceae</taxon>
        <taxon>Trichormus</taxon>
    </lineage>
</organism>
<comment type="function">
    <text evidence="1">Catalyzes the dephosphorylation of undecaprenyl diphosphate (UPP). Confers resistance to bacitracin.</text>
</comment>
<comment type="catalytic activity">
    <reaction evidence="1">
        <text>di-trans,octa-cis-undecaprenyl diphosphate + H2O = di-trans,octa-cis-undecaprenyl phosphate + phosphate + H(+)</text>
        <dbReference type="Rhea" id="RHEA:28094"/>
        <dbReference type="ChEBI" id="CHEBI:15377"/>
        <dbReference type="ChEBI" id="CHEBI:15378"/>
        <dbReference type="ChEBI" id="CHEBI:43474"/>
        <dbReference type="ChEBI" id="CHEBI:58405"/>
        <dbReference type="ChEBI" id="CHEBI:60392"/>
        <dbReference type="EC" id="3.6.1.27"/>
    </reaction>
</comment>
<comment type="subcellular location">
    <subcellularLocation>
        <location evidence="1">Cell inner membrane</location>
        <topology evidence="1">Multi-pass membrane protein</topology>
    </subcellularLocation>
</comment>
<comment type="miscellaneous">
    <text>Bacitracin is thought to be involved in the inhibition of peptidoglycan synthesis by sequestering undecaprenyl diphosphate, thereby reducing the pool of lipid carrier available.</text>
</comment>
<comment type="similarity">
    <text evidence="1">Belongs to the UppP family.</text>
</comment>
<gene>
    <name evidence="1" type="primary">uppP</name>
    <name type="ordered locus">Ava_0633</name>
</gene>
<proteinExistence type="inferred from homology"/>
<accession>Q3MFH9</accession>
<dbReference type="EC" id="3.6.1.27" evidence="1"/>
<dbReference type="EMBL" id="CP000117">
    <property type="protein sequence ID" value="ABA20257.1"/>
    <property type="molecule type" value="Genomic_DNA"/>
</dbReference>
<dbReference type="SMR" id="Q3MFH9"/>
<dbReference type="STRING" id="240292.Ava_0633"/>
<dbReference type="KEGG" id="ava:Ava_0633"/>
<dbReference type="eggNOG" id="COG1968">
    <property type="taxonomic scope" value="Bacteria"/>
</dbReference>
<dbReference type="HOGENOM" id="CLU_060296_1_0_3"/>
<dbReference type="Proteomes" id="UP000002533">
    <property type="component" value="Chromosome"/>
</dbReference>
<dbReference type="GO" id="GO:0005886">
    <property type="term" value="C:plasma membrane"/>
    <property type="evidence" value="ECO:0007669"/>
    <property type="project" value="UniProtKB-SubCell"/>
</dbReference>
<dbReference type="GO" id="GO:0050380">
    <property type="term" value="F:undecaprenyl-diphosphatase activity"/>
    <property type="evidence" value="ECO:0007669"/>
    <property type="project" value="UniProtKB-UniRule"/>
</dbReference>
<dbReference type="GO" id="GO:0071555">
    <property type="term" value="P:cell wall organization"/>
    <property type="evidence" value="ECO:0007669"/>
    <property type="project" value="UniProtKB-KW"/>
</dbReference>
<dbReference type="GO" id="GO:0009252">
    <property type="term" value="P:peptidoglycan biosynthetic process"/>
    <property type="evidence" value="ECO:0007669"/>
    <property type="project" value="UniProtKB-KW"/>
</dbReference>
<dbReference type="GO" id="GO:0008360">
    <property type="term" value="P:regulation of cell shape"/>
    <property type="evidence" value="ECO:0007669"/>
    <property type="project" value="UniProtKB-KW"/>
</dbReference>
<dbReference type="GO" id="GO:0046677">
    <property type="term" value="P:response to antibiotic"/>
    <property type="evidence" value="ECO:0007669"/>
    <property type="project" value="UniProtKB-UniRule"/>
</dbReference>
<dbReference type="HAMAP" id="MF_01006">
    <property type="entry name" value="Undec_diphosphatase"/>
    <property type="match status" value="1"/>
</dbReference>
<dbReference type="InterPro" id="IPR003824">
    <property type="entry name" value="UppP"/>
</dbReference>
<dbReference type="NCBIfam" id="NF001394">
    <property type="entry name" value="PRK00281.2-5"/>
    <property type="match status" value="1"/>
</dbReference>
<dbReference type="NCBIfam" id="TIGR00753">
    <property type="entry name" value="undec_PP_bacA"/>
    <property type="match status" value="1"/>
</dbReference>
<dbReference type="PANTHER" id="PTHR30622">
    <property type="entry name" value="UNDECAPRENYL-DIPHOSPHATASE"/>
    <property type="match status" value="1"/>
</dbReference>
<dbReference type="PANTHER" id="PTHR30622:SF4">
    <property type="entry name" value="UNDECAPRENYL-DIPHOSPHATASE"/>
    <property type="match status" value="1"/>
</dbReference>
<dbReference type="Pfam" id="PF02673">
    <property type="entry name" value="BacA"/>
    <property type="match status" value="1"/>
</dbReference>